<feature type="initiator methionine" description="Removed" evidence="1">
    <location>
        <position position="1"/>
    </location>
</feature>
<feature type="chain" id="PRO_0000168418" description="L-lactate dehydrogenase A chain">
    <location>
        <begin position="2"/>
        <end position="332"/>
    </location>
</feature>
<feature type="active site" description="Proton acceptor" evidence="4">
    <location>
        <position position="193"/>
    </location>
</feature>
<feature type="binding site">
    <location>
        <begin position="29"/>
        <end position="57"/>
    </location>
    <ligand>
        <name>NAD(+)</name>
        <dbReference type="ChEBI" id="CHEBI:57540"/>
    </ligand>
</feature>
<feature type="binding site">
    <location>
        <position position="99"/>
    </location>
    <ligand>
        <name>NAD(+)</name>
        <dbReference type="ChEBI" id="CHEBI:57540"/>
    </ligand>
</feature>
<feature type="binding site">
    <location>
        <position position="106"/>
    </location>
    <ligand>
        <name>substrate</name>
    </ligand>
</feature>
<feature type="binding site">
    <location>
        <position position="138"/>
    </location>
    <ligand>
        <name>NAD(+)</name>
        <dbReference type="ChEBI" id="CHEBI:57540"/>
    </ligand>
</feature>
<feature type="binding site">
    <location>
        <position position="138"/>
    </location>
    <ligand>
        <name>substrate</name>
    </ligand>
</feature>
<feature type="binding site">
    <location>
        <position position="169"/>
    </location>
    <ligand>
        <name>substrate</name>
    </ligand>
</feature>
<feature type="binding site">
    <location>
        <position position="248"/>
    </location>
    <ligand>
        <name>substrate</name>
    </ligand>
</feature>
<feature type="modified residue" description="N-acetylalanine" evidence="1">
    <location>
        <position position="2"/>
    </location>
</feature>
<feature type="modified residue" description="N6-acetyllysine; alternate" evidence="1">
    <location>
        <position position="5"/>
    </location>
</feature>
<feature type="modified residue" description="N6-succinyllysine; alternate" evidence="3">
    <location>
        <position position="5"/>
    </location>
</feature>
<feature type="modified residue" description="N6-acetyllysine" evidence="1">
    <location>
        <position position="14"/>
    </location>
</feature>
<feature type="modified residue" description="N6-acetyllysine; alternate" evidence="1">
    <location>
        <position position="57"/>
    </location>
</feature>
<feature type="modified residue" description="N6-acetyllysine" evidence="1">
    <location>
        <position position="81"/>
    </location>
</feature>
<feature type="modified residue" description="N6-acetyllysine; alternate" evidence="1">
    <location>
        <position position="118"/>
    </location>
</feature>
<feature type="modified residue" description="N6-succinyllysine; alternate" evidence="3">
    <location>
        <position position="118"/>
    </location>
</feature>
<feature type="modified residue" description="N6-acetyllysine" evidence="1">
    <location>
        <position position="126"/>
    </location>
</feature>
<feature type="modified residue" description="N6-acetyllysine" evidence="3">
    <location>
        <position position="224"/>
    </location>
</feature>
<feature type="modified residue" description="N6-acetyllysine" evidence="3">
    <location>
        <position position="232"/>
    </location>
</feature>
<feature type="modified residue" description="Phosphotyrosine" evidence="3">
    <location>
        <position position="239"/>
    </location>
</feature>
<feature type="modified residue" description="N6-acetyllysine" evidence="3">
    <location>
        <position position="243"/>
    </location>
</feature>
<feature type="modified residue" description="Phosphothreonine" evidence="2">
    <location>
        <position position="309"/>
    </location>
</feature>
<feature type="modified residue" description="Phosphoserine" evidence="1">
    <location>
        <position position="310"/>
    </location>
</feature>
<feature type="modified residue" description="N6-acetyllysine; alternate" evidence="1">
    <location>
        <position position="318"/>
    </location>
</feature>
<feature type="modified residue" description="N6-succinyllysine; alternate" evidence="3">
    <location>
        <position position="318"/>
    </location>
</feature>
<feature type="modified residue" description="Phosphothreonine" evidence="2">
    <location>
        <position position="322"/>
    </location>
</feature>
<feature type="cross-link" description="Glycyl lysine isopeptide (Lys-Gly) (interchain with G-Cter in SUMO2); alternate" evidence="1">
    <location>
        <position position="57"/>
    </location>
</feature>
<feature type="helix" evidence="6">
    <location>
        <begin position="4"/>
        <end position="8"/>
    </location>
</feature>
<feature type="strand" evidence="6">
    <location>
        <begin position="9"/>
        <end position="11"/>
    </location>
</feature>
<feature type="strand" evidence="6">
    <location>
        <begin position="20"/>
        <end position="26"/>
    </location>
</feature>
<feature type="helix" evidence="6">
    <location>
        <begin position="30"/>
        <end position="41"/>
    </location>
</feature>
<feature type="strand" evidence="6">
    <location>
        <begin position="46"/>
        <end position="51"/>
    </location>
</feature>
<feature type="helix" evidence="6">
    <location>
        <begin position="55"/>
        <end position="66"/>
    </location>
</feature>
<feature type="helix" evidence="6">
    <location>
        <begin position="67"/>
        <end position="71"/>
    </location>
</feature>
<feature type="strand" evidence="6">
    <location>
        <begin position="76"/>
        <end position="79"/>
    </location>
</feature>
<feature type="helix" evidence="6">
    <location>
        <begin position="83"/>
        <end position="86"/>
    </location>
</feature>
<feature type="strand" evidence="6">
    <location>
        <begin position="90"/>
        <end position="94"/>
    </location>
</feature>
<feature type="helix" evidence="6">
    <location>
        <begin position="106"/>
        <end position="127"/>
    </location>
</feature>
<feature type="strand" evidence="6">
    <location>
        <begin position="132"/>
        <end position="135"/>
    </location>
</feature>
<feature type="strand" evidence="6">
    <location>
        <begin position="137"/>
        <end position="139"/>
    </location>
</feature>
<feature type="helix" evidence="6">
    <location>
        <begin position="140"/>
        <end position="151"/>
    </location>
</feature>
<feature type="helix" evidence="6">
    <location>
        <begin position="155"/>
        <end position="157"/>
    </location>
</feature>
<feature type="strand" evidence="6">
    <location>
        <begin position="158"/>
        <end position="160"/>
    </location>
</feature>
<feature type="helix" evidence="6">
    <location>
        <begin position="164"/>
        <end position="178"/>
    </location>
</feature>
<feature type="helix" evidence="6">
    <location>
        <begin position="182"/>
        <end position="184"/>
    </location>
</feature>
<feature type="strand" evidence="6">
    <location>
        <begin position="189"/>
        <end position="194"/>
    </location>
</feature>
<feature type="helix" evidence="6">
    <location>
        <begin position="201"/>
        <end position="203"/>
    </location>
</feature>
<feature type="helix" evidence="6">
    <location>
        <begin position="211"/>
        <end position="214"/>
    </location>
</feature>
<feature type="turn" evidence="6">
    <location>
        <begin position="216"/>
        <end position="219"/>
    </location>
</feature>
<feature type="strand" evidence="7">
    <location>
        <begin position="220"/>
        <end position="222"/>
    </location>
</feature>
<feature type="helix" evidence="6">
    <location>
        <begin position="228"/>
        <end position="245"/>
    </location>
</feature>
<feature type="helix" evidence="6">
    <location>
        <begin position="250"/>
        <end position="264"/>
    </location>
</feature>
<feature type="strand" evidence="6">
    <location>
        <begin position="269"/>
        <end position="276"/>
    </location>
</feature>
<feature type="strand" evidence="6">
    <location>
        <begin position="288"/>
        <end position="296"/>
    </location>
</feature>
<feature type="strand" evidence="6">
    <location>
        <begin position="299"/>
        <end position="304"/>
    </location>
</feature>
<feature type="helix" evidence="6">
    <location>
        <begin position="310"/>
        <end position="327"/>
    </location>
</feature>
<sequence>MAALKDQLIHNLLKEEHVPQNKITVVGVGAVGMACAISILMKDLADELALVDVMEDKLKGEMMDLQHGSLFLRTPKIVSGKDYSVTANSKLVIITAGARQQEGESRLNLVQRNVNIFKFIIPNVVKYSPHCKLLVVSNPVDILTYVAWKISGFPKNRVIGSGCNLDSARFRYLMGERLGVHALSCHGWILGEHGDSSVPVWSGMNVAGVSLKTLHPELGTDADKEQWKQVHKQVVDSAYEVIKLKGYTTWAIGLSVADLAESIMKNLRRVHPISTMLKGLYGIKEDVFLSVPCVLGQNGISDVVKVTLTSEEEAHLKKSADTLWGIQKELQF</sequence>
<keyword id="KW-0002">3D-structure</keyword>
<keyword id="KW-0007">Acetylation</keyword>
<keyword id="KW-0963">Cytoplasm</keyword>
<keyword id="KW-1017">Isopeptide bond</keyword>
<keyword id="KW-0520">NAD</keyword>
<keyword id="KW-0560">Oxidoreductase</keyword>
<keyword id="KW-0597">Phosphoprotein</keyword>
<keyword id="KW-1185">Reference proteome</keyword>
<keyword id="KW-0832">Ubl conjugation</keyword>
<organism>
    <name type="scientific">Oryctolagus cuniculus</name>
    <name type="common">Rabbit</name>
    <dbReference type="NCBI Taxonomy" id="9986"/>
    <lineage>
        <taxon>Eukaryota</taxon>
        <taxon>Metazoa</taxon>
        <taxon>Chordata</taxon>
        <taxon>Craniata</taxon>
        <taxon>Vertebrata</taxon>
        <taxon>Euteleostomi</taxon>
        <taxon>Mammalia</taxon>
        <taxon>Eutheria</taxon>
        <taxon>Euarchontoglires</taxon>
        <taxon>Glires</taxon>
        <taxon>Lagomorpha</taxon>
        <taxon>Leporidae</taxon>
        <taxon>Oryctolagus</taxon>
    </lineage>
</organism>
<name>LDHA_RABIT</name>
<proteinExistence type="evidence at protein level"/>
<gene>
    <name type="primary">LDHA</name>
</gene>
<evidence type="ECO:0000250" key="1">
    <source>
        <dbReference type="UniProtKB" id="P00338"/>
    </source>
</evidence>
<evidence type="ECO:0000250" key="2">
    <source>
        <dbReference type="UniProtKB" id="P04642"/>
    </source>
</evidence>
<evidence type="ECO:0000250" key="3">
    <source>
        <dbReference type="UniProtKB" id="P06151"/>
    </source>
</evidence>
<evidence type="ECO:0000269" key="4">
    <source>
    </source>
</evidence>
<evidence type="ECO:0000305" key="5"/>
<evidence type="ECO:0007829" key="6">
    <source>
        <dbReference type="PDB" id="5NQB"/>
    </source>
</evidence>
<evidence type="ECO:0007829" key="7">
    <source>
        <dbReference type="PDB" id="6P6U"/>
    </source>
</evidence>
<comment type="function">
    <text evidence="1">Interconverts simultaneously and stereospecifically pyruvate and lactate with concomitant interconversion of NADH and NAD(+).</text>
</comment>
<comment type="catalytic activity">
    <reaction evidence="1">
        <text>(S)-lactate + NAD(+) = pyruvate + NADH + H(+)</text>
        <dbReference type="Rhea" id="RHEA:23444"/>
        <dbReference type="ChEBI" id="CHEBI:15361"/>
        <dbReference type="ChEBI" id="CHEBI:15378"/>
        <dbReference type="ChEBI" id="CHEBI:16651"/>
        <dbReference type="ChEBI" id="CHEBI:57540"/>
        <dbReference type="ChEBI" id="CHEBI:57945"/>
        <dbReference type="EC" id="1.1.1.27"/>
    </reaction>
    <physiologicalReaction direction="left-to-right" evidence="1">
        <dbReference type="Rhea" id="RHEA:23445"/>
    </physiologicalReaction>
    <physiologicalReaction direction="right-to-left" evidence="1">
        <dbReference type="Rhea" id="RHEA:23446"/>
    </physiologicalReaction>
</comment>
<comment type="pathway">
    <text evidence="1">Fermentation; pyruvate fermentation to lactate; (S)-lactate from pyruvate: step 1/1.</text>
</comment>
<comment type="subunit">
    <text evidence="1 4">Homotetramer (PubMed:19715328). Interacts with PTEN upstream reading frame protein MP31 (By similarity).</text>
</comment>
<comment type="subcellular location">
    <subcellularLocation>
        <location>Cytoplasm</location>
    </subcellularLocation>
</comment>
<comment type="PTM">
    <text evidence="1">ISGylated.</text>
</comment>
<comment type="similarity">
    <text evidence="5">Belongs to the LDH/MDH superfamily. LDH family.</text>
</comment>
<dbReference type="EC" id="1.1.1.27" evidence="1"/>
<dbReference type="EMBL" id="M22585">
    <property type="protein sequence ID" value="AAA31382.1"/>
    <property type="molecule type" value="mRNA"/>
</dbReference>
<dbReference type="PIR" id="A32957">
    <property type="entry name" value="A32957"/>
</dbReference>
<dbReference type="RefSeq" id="NP_001075746.1">
    <property type="nucleotide sequence ID" value="NM_001082277.1"/>
</dbReference>
<dbReference type="PDB" id="3H3F">
    <property type="method" value="X-ray"/>
    <property type="resolution" value="2.38 A"/>
    <property type="chains" value="A/B/C/D/E/F/G/H=2-332"/>
</dbReference>
<dbReference type="PDB" id="4I8X">
    <property type="method" value="X-ray"/>
    <property type="resolution" value="2.23 A"/>
    <property type="chains" value="A/B/C/D/E/F/G/H=2-332"/>
</dbReference>
<dbReference type="PDB" id="4I9H">
    <property type="method" value="X-ray"/>
    <property type="resolution" value="2.17 A"/>
    <property type="chains" value="A/B/C/D/E/F/G/H=2-332"/>
</dbReference>
<dbReference type="PDB" id="4I9N">
    <property type="method" value="X-ray"/>
    <property type="resolution" value="2.35 A"/>
    <property type="chains" value="A/B/C/D/E/F/G/H=2-332"/>
</dbReference>
<dbReference type="PDB" id="4I9U">
    <property type="method" value="X-ray"/>
    <property type="resolution" value="2.50 A"/>
    <property type="chains" value="A/B/C/D/E/F/G/H=2-332"/>
</dbReference>
<dbReference type="PDB" id="5KKC">
    <property type="method" value="X-ray"/>
    <property type="resolution" value="1.86 A"/>
    <property type="chains" value="A/B/C/D=2-332"/>
</dbReference>
<dbReference type="PDB" id="5NQB">
    <property type="method" value="X-ray"/>
    <property type="resolution" value="1.58 A"/>
    <property type="chains" value="A/B/C/D=1-332"/>
</dbReference>
<dbReference type="PDB" id="5NQQ">
    <property type="method" value="X-ray"/>
    <property type="resolution" value="1.87 A"/>
    <property type="chains" value="A/B/C/D=1-332"/>
</dbReference>
<dbReference type="PDB" id="6P6U">
    <property type="method" value="X-ray"/>
    <property type="resolution" value="2.42 A"/>
    <property type="chains" value="A/B/C/D/E/F/G/H/I/J/K/L/M/N/O/P=1-332"/>
</dbReference>
<dbReference type="PDB" id="7P4G">
    <property type="method" value="X-ray"/>
    <property type="resolution" value="2.60 A"/>
    <property type="chains" value="A/B/C/D/E/F/G/H/I/J/K/L/M/N/O/P=1-332"/>
</dbReference>
<dbReference type="PDBsum" id="3H3F"/>
<dbReference type="PDBsum" id="4I8X"/>
<dbReference type="PDBsum" id="4I9H"/>
<dbReference type="PDBsum" id="4I9N"/>
<dbReference type="PDBsum" id="4I9U"/>
<dbReference type="PDBsum" id="5KKC"/>
<dbReference type="PDBsum" id="5NQB"/>
<dbReference type="PDBsum" id="5NQQ"/>
<dbReference type="PDBsum" id="6P6U"/>
<dbReference type="PDBsum" id="7P4G"/>
<dbReference type="SMR" id="P13491"/>
<dbReference type="FunCoup" id="P13491">
    <property type="interactions" value="610"/>
</dbReference>
<dbReference type="IntAct" id="P13491">
    <property type="interactions" value="1"/>
</dbReference>
<dbReference type="STRING" id="9986.ENSOCUP00000013690"/>
<dbReference type="ChEMBL" id="CHEMBL4523188"/>
<dbReference type="PaxDb" id="9986-ENSOCUP00000021667"/>
<dbReference type="GeneID" id="100009107"/>
<dbReference type="KEGG" id="ocu:100009107"/>
<dbReference type="CTD" id="3939"/>
<dbReference type="eggNOG" id="KOG1495">
    <property type="taxonomic scope" value="Eukaryota"/>
</dbReference>
<dbReference type="InParanoid" id="P13491"/>
<dbReference type="OrthoDB" id="5405561at2759"/>
<dbReference type="BRENDA" id="1.1.1.27">
    <property type="organism ID" value="1749"/>
</dbReference>
<dbReference type="SABIO-RK" id="P13491"/>
<dbReference type="UniPathway" id="UPA00554">
    <property type="reaction ID" value="UER00611"/>
</dbReference>
<dbReference type="EvolutionaryTrace" id="P13491"/>
<dbReference type="Proteomes" id="UP000001811">
    <property type="component" value="Unplaced"/>
</dbReference>
<dbReference type="GO" id="GO:0005737">
    <property type="term" value="C:cytoplasm"/>
    <property type="evidence" value="ECO:0007669"/>
    <property type="project" value="UniProtKB-SubCell"/>
</dbReference>
<dbReference type="GO" id="GO:0004459">
    <property type="term" value="F:L-lactate dehydrogenase activity"/>
    <property type="evidence" value="ECO:0007669"/>
    <property type="project" value="UniProtKB-EC"/>
</dbReference>
<dbReference type="GO" id="GO:0006089">
    <property type="term" value="P:lactate metabolic process"/>
    <property type="evidence" value="ECO:0007669"/>
    <property type="project" value="UniProtKB-ARBA"/>
</dbReference>
<dbReference type="CDD" id="cd05293">
    <property type="entry name" value="LDH_1"/>
    <property type="match status" value="1"/>
</dbReference>
<dbReference type="FunFam" id="3.40.50.720:FF:000029">
    <property type="entry name" value="L-lactate dehydrogenase A chain"/>
    <property type="match status" value="1"/>
</dbReference>
<dbReference type="FunFam" id="3.90.110.10:FF:000003">
    <property type="entry name" value="L-lactate dehydrogenase A chain"/>
    <property type="match status" value="1"/>
</dbReference>
<dbReference type="Gene3D" id="3.90.110.10">
    <property type="entry name" value="Lactate dehydrogenase/glycoside hydrolase, family 4, C-terminal"/>
    <property type="match status" value="1"/>
</dbReference>
<dbReference type="Gene3D" id="3.40.50.720">
    <property type="entry name" value="NAD(P)-binding Rossmann-like Domain"/>
    <property type="match status" value="1"/>
</dbReference>
<dbReference type="HAMAP" id="MF_00488">
    <property type="entry name" value="Lactate_dehydrog"/>
    <property type="match status" value="1"/>
</dbReference>
<dbReference type="InterPro" id="IPR001557">
    <property type="entry name" value="L-lactate/malate_DH"/>
</dbReference>
<dbReference type="InterPro" id="IPR011304">
    <property type="entry name" value="L-lactate_DH"/>
</dbReference>
<dbReference type="InterPro" id="IPR018177">
    <property type="entry name" value="L-lactate_DH_AS"/>
</dbReference>
<dbReference type="InterPro" id="IPR022383">
    <property type="entry name" value="Lactate/malate_DH_C"/>
</dbReference>
<dbReference type="InterPro" id="IPR001236">
    <property type="entry name" value="Lactate/malate_DH_N"/>
</dbReference>
<dbReference type="InterPro" id="IPR015955">
    <property type="entry name" value="Lactate_DH/Glyco_Ohase_4_C"/>
</dbReference>
<dbReference type="InterPro" id="IPR036291">
    <property type="entry name" value="NAD(P)-bd_dom_sf"/>
</dbReference>
<dbReference type="NCBIfam" id="TIGR01771">
    <property type="entry name" value="L-LDH-NAD"/>
    <property type="match status" value="1"/>
</dbReference>
<dbReference type="NCBIfam" id="NF000824">
    <property type="entry name" value="PRK00066.1"/>
    <property type="match status" value="1"/>
</dbReference>
<dbReference type="NCBIfam" id="NF004863">
    <property type="entry name" value="PRK06223.1"/>
    <property type="match status" value="1"/>
</dbReference>
<dbReference type="PANTHER" id="PTHR43128">
    <property type="entry name" value="L-2-HYDROXYCARBOXYLATE DEHYDROGENASE (NAD(P)(+))"/>
    <property type="match status" value="1"/>
</dbReference>
<dbReference type="PANTHER" id="PTHR43128:SF10">
    <property type="entry name" value="L-LACTATE DEHYDROGENASE A CHAIN"/>
    <property type="match status" value="1"/>
</dbReference>
<dbReference type="Pfam" id="PF02866">
    <property type="entry name" value="Ldh_1_C"/>
    <property type="match status" value="1"/>
</dbReference>
<dbReference type="Pfam" id="PF00056">
    <property type="entry name" value="Ldh_1_N"/>
    <property type="match status" value="1"/>
</dbReference>
<dbReference type="PIRSF" id="PIRSF000102">
    <property type="entry name" value="Lac_mal_DH"/>
    <property type="match status" value="1"/>
</dbReference>
<dbReference type="PRINTS" id="PR00086">
    <property type="entry name" value="LLDHDRGNASE"/>
</dbReference>
<dbReference type="SUPFAM" id="SSF56327">
    <property type="entry name" value="LDH C-terminal domain-like"/>
    <property type="match status" value="1"/>
</dbReference>
<dbReference type="SUPFAM" id="SSF51735">
    <property type="entry name" value="NAD(P)-binding Rossmann-fold domains"/>
    <property type="match status" value="1"/>
</dbReference>
<dbReference type="PROSITE" id="PS00064">
    <property type="entry name" value="L_LDH"/>
    <property type="match status" value="1"/>
</dbReference>
<reference key="1">
    <citation type="journal article" date="1989" name="J. Biol. Chem.">
        <title>Characterization of rabbit lactate dehydrogenase-M and lactate dehydrogenase-H cDNAs. Control of lactate dehydrogenase expression in rabbit muscle.</title>
        <authorList>
            <person name="Sass C."/>
            <person name="Briand M."/>
            <person name="Benslimane S."/>
            <person name="Renaud M."/>
            <person name="Briand Y."/>
        </authorList>
    </citation>
    <scope>NUCLEOTIDE SEQUENCE [MRNA]</scope>
</reference>
<reference key="2">
    <citation type="journal article" date="2009" name="J. Phys. Chem. B">
        <title>Modeling of isotope effects on binding oxamate to lactic dehydrogenase.</title>
        <authorList>
            <person name="Swiderek K."/>
            <person name="Panczakiewicz A."/>
            <person name="Bujacz A."/>
            <person name="Bujacz G."/>
            <person name="Paneth P."/>
        </authorList>
    </citation>
    <scope>X-RAY CRYSTALLOGRAPHY (2.38 ANGSTROMS) OF 2-332 IN COMPLEX WITH NADH AMD INHIBITOR</scope>
    <scope>SUBUNIT</scope>
    <scope>ACTIVE SITE</scope>
    <scope>SUBSTRATE-BINDING SITES</scope>
    <scope>NAD-BINDING SITES</scope>
</reference>
<protein>
    <recommendedName>
        <fullName>L-lactate dehydrogenase A chain</fullName>
        <shortName>LDH-A</shortName>
        <ecNumber evidence="1">1.1.1.27</ecNumber>
    </recommendedName>
    <alternativeName>
        <fullName>LDH muscle subunit</fullName>
        <shortName>LDH-M</shortName>
    </alternativeName>
</protein>
<accession>P13491</accession>